<comment type="function">
    <text evidence="1">DNA ligase that catalyzes the formation of phosphodiester linkages between 5'-phosphoryl and 3'-hydroxyl groups in double-stranded DNA using NAD as a coenzyme and as the energy source for the reaction. It is essential for DNA replication and repair of damaged DNA.</text>
</comment>
<comment type="catalytic activity">
    <reaction evidence="1">
        <text>NAD(+) + (deoxyribonucleotide)n-3'-hydroxyl + 5'-phospho-(deoxyribonucleotide)m = (deoxyribonucleotide)n+m + AMP + beta-nicotinamide D-nucleotide.</text>
        <dbReference type="EC" id="6.5.1.2"/>
    </reaction>
</comment>
<comment type="cofactor">
    <cofactor evidence="1">
        <name>Mg(2+)</name>
        <dbReference type="ChEBI" id="CHEBI:18420"/>
    </cofactor>
    <cofactor evidence="1">
        <name>Mn(2+)</name>
        <dbReference type="ChEBI" id="CHEBI:29035"/>
    </cofactor>
</comment>
<comment type="similarity">
    <text evidence="1">Belongs to the NAD-dependent DNA ligase family. LigA subfamily.</text>
</comment>
<accession>B1VZW1</accession>
<sequence length="743" mass="81428">MAGEDRVEQESSVPADVREKHALLAEQIEEHRFRYYVKDQPVVSDADFDRQLRSLEALEEEHPSLRTPDSPTQKVAGPYRTEFTSVEHRERMLSLDNAFDDEELAAWADRVAKDVGTPDHHFLCELKVDGLAVNLTYEHGRLTRAATRGDGRTGEDITPNVRTIAEIPHRLKGEDIPALVEIRGEVFFPMEDFEELNARLVAADDKPFANPRNAAAGSLRQKDPKVTATRPLHMVVHGIGAHEGLSIDRLSAAYDLLHTWGLPTARHNKVVDSLAGVREFIAHYGENRHSVEHEIDGVVVKLDEIPLQGRLGSTSRAPRWAIAWKYAPEEVNTKLVNIRVGVGRTGRVTPYAQVEPVEVAGSEVEFATLHNQNVVKAKGVLIGDTVVIRKAGEVIPEILGPVVDLRDGTEKAFEMPTHCPECGTELRPMKEADIDLRCPNARTCPAQLRERVFYLAGRKSLDIDHFGYVAAAALTRPLEPAEPVLKDESDLFSLTVEQLLPIRAYVLDQDSGLPKRDPKTGEEKIATVFANQQGEPKKNAVAMLEGIAAAKDAPLARVLTGLSIRHVGPVAAQELARQFRSIERIDEATEEELAAADGVGPTIAASVKQWFAEDWHREIVRKWREAGVRMADEGSDEDEGPRPLEGLTVVVTGTLAGHTRDGAKEALQALGAKVAGSVSKKTAFVVVGDNPGSKYDKAMQLKVPVLDEDGFAILLEQGPERAKEAALPVPEAAPAADPENSGE</sequence>
<keyword id="KW-0227">DNA damage</keyword>
<keyword id="KW-0234">DNA repair</keyword>
<keyword id="KW-0235">DNA replication</keyword>
<keyword id="KW-0436">Ligase</keyword>
<keyword id="KW-0460">Magnesium</keyword>
<keyword id="KW-0464">Manganese</keyword>
<keyword id="KW-0479">Metal-binding</keyword>
<keyword id="KW-0520">NAD</keyword>
<keyword id="KW-0862">Zinc</keyword>
<proteinExistence type="inferred from homology"/>
<reference key="1">
    <citation type="journal article" date="2008" name="J. Bacteriol.">
        <title>Genome sequence of the streptomycin-producing microorganism Streptomyces griseus IFO 13350.</title>
        <authorList>
            <person name="Ohnishi Y."/>
            <person name="Ishikawa J."/>
            <person name="Hara H."/>
            <person name="Suzuki H."/>
            <person name="Ikenoya M."/>
            <person name="Ikeda H."/>
            <person name="Yamashita A."/>
            <person name="Hattori M."/>
            <person name="Horinouchi S."/>
        </authorList>
    </citation>
    <scope>NUCLEOTIDE SEQUENCE [LARGE SCALE GENOMIC DNA]</scope>
    <source>
        <strain>JCM 4626 / CBS 651.72 / NBRC 13350 / KCC S-0626 / ISP 5235</strain>
    </source>
</reference>
<dbReference type="EC" id="6.5.1.2" evidence="1"/>
<dbReference type="EMBL" id="AP009493">
    <property type="protein sequence ID" value="BAG18850.1"/>
    <property type="molecule type" value="Genomic_DNA"/>
</dbReference>
<dbReference type="SMR" id="B1VZW1"/>
<dbReference type="KEGG" id="sgr:SGR_2021"/>
<dbReference type="PATRIC" id="fig|455632.4.peg.2052"/>
<dbReference type="eggNOG" id="COG0272">
    <property type="taxonomic scope" value="Bacteria"/>
</dbReference>
<dbReference type="HOGENOM" id="CLU_007764_2_1_11"/>
<dbReference type="Proteomes" id="UP000001685">
    <property type="component" value="Chromosome"/>
</dbReference>
<dbReference type="GO" id="GO:0005829">
    <property type="term" value="C:cytosol"/>
    <property type="evidence" value="ECO:0007669"/>
    <property type="project" value="TreeGrafter"/>
</dbReference>
<dbReference type="GO" id="GO:0003911">
    <property type="term" value="F:DNA ligase (NAD+) activity"/>
    <property type="evidence" value="ECO:0007669"/>
    <property type="project" value="UniProtKB-UniRule"/>
</dbReference>
<dbReference type="GO" id="GO:0046872">
    <property type="term" value="F:metal ion binding"/>
    <property type="evidence" value="ECO:0007669"/>
    <property type="project" value="UniProtKB-KW"/>
</dbReference>
<dbReference type="GO" id="GO:0006281">
    <property type="term" value="P:DNA repair"/>
    <property type="evidence" value="ECO:0007669"/>
    <property type="project" value="UniProtKB-KW"/>
</dbReference>
<dbReference type="GO" id="GO:0006260">
    <property type="term" value="P:DNA replication"/>
    <property type="evidence" value="ECO:0007669"/>
    <property type="project" value="UniProtKB-KW"/>
</dbReference>
<dbReference type="CDD" id="cd17748">
    <property type="entry name" value="BRCT_DNA_ligase_like"/>
    <property type="match status" value="1"/>
</dbReference>
<dbReference type="CDD" id="cd00114">
    <property type="entry name" value="LIGANc"/>
    <property type="match status" value="1"/>
</dbReference>
<dbReference type="FunFam" id="1.10.150.20:FF:000006">
    <property type="entry name" value="DNA ligase"/>
    <property type="match status" value="1"/>
</dbReference>
<dbReference type="FunFam" id="2.40.50.140:FF:000012">
    <property type="entry name" value="DNA ligase"/>
    <property type="match status" value="1"/>
</dbReference>
<dbReference type="FunFam" id="3.30.470.30:FF:000001">
    <property type="entry name" value="DNA ligase"/>
    <property type="match status" value="1"/>
</dbReference>
<dbReference type="FunFam" id="3.40.50.10190:FF:000054">
    <property type="entry name" value="DNA ligase"/>
    <property type="match status" value="1"/>
</dbReference>
<dbReference type="Gene3D" id="6.20.10.30">
    <property type="match status" value="1"/>
</dbReference>
<dbReference type="Gene3D" id="1.10.150.20">
    <property type="entry name" value="5' to 3' exonuclease, C-terminal subdomain"/>
    <property type="match status" value="2"/>
</dbReference>
<dbReference type="Gene3D" id="3.40.50.10190">
    <property type="entry name" value="BRCT domain"/>
    <property type="match status" value="1"/>
</dbReference>
<dbReference type="Gene3D" id="3.30.470.30">
    <property type="entry name" value="DNA ligase/mRNA capping enzyme"/>
    <property type="match status" value="1"/>
</dbReference>
<dbReference type="Gene3D" id="1.10.287.610">
    <property type="entry name" value="Helix hairpin bin"/>
    <property type="match status" value="1"/>
</dbReference>
<dbReference type="Gene3D" id="2.40.50.140">
    <property type="entry name" value="Nucleic acid-binding proteins"/>
    <property type="match status" value="1"/>
</dbReference>
<dbReference type="HAMAP" id="MF_01588">
    <property type="entry name" value="DNA_ligase_A"/>
    <property type="match status" value="1"/>
</dbReference>
<dbReference type="InterPro" id="IPR001357">
    <property type="entry name" value="BRCT_dom"/>
</dbReference>
<dbReference type="InterPro" id="IPR036420">
    <property type="entry name" value="BRCT_dom_sf"/>
</dbReference>
<dbReference type="InterPro" id="IPR041663">
    <property type="entry name" value="DisA/LigA_HHH"/>
</dbReference>
<dbReference type="InterPro" id="IPR001679">
    <property type="entry name" value="DNA_ligase"/>
</dbReference>
<dbReference type="InterPro" id="IPR018239">
    <property type="entry name" value="DNA_ligase_AS"/>
</dbReference>
<dbReference type="InterPro" id="IPR033136">
    <property type="entry name" value="DNA_ligase_CS"/>
</dbReference>
<dbReference type="InterPro" id="IPR013839">
    <property type="entry name" value="DNAligase_adenylation"/>
</dbReference>
<dbReference type="InterPro" id="IPR013840">
    <property type="entry name" value="DNAligase_N"/>
</dbReference>
<dbReference type="InterPro" id="IPR012340">
    <property type="entry name" value="NA-bd_OB-fold"/>
</dbReference>
<dbReference type="InterPro" id="IPR004150">
    <property type="entry name" value="NAD_DNA_ligase_OB"/>
</dbReference>
<dbReference type="InterPro" id="IPR010994">
    <property type="entry name" value="RuvA_2-like"/>
</dbReference>
<dbReference type="InterPro" id="IPR004149">
    <property type="entry name" value="Znf_DNAligase_C4"/>
</dbReference>
<dbReference type="NCBIfam" id="TIGR00575">
    <property type="entry name" value="dnlj"/>
    <property type="match status" value="1"/>
</dbReference>
<dbReference type="NCBIfam" id="NF005932">
    <property type="entry name" value="PRK07956.1"/>
    <property type="match status" value="1"/>
</dbReference>
<dbReference type="PANTHER" id="PTHR23389">
    <property type="entry name" value="CHROMOSOME TRANSMISSION FIDELITY FACTOR 18"/>
    <property type="match status" value="1"/>
</dbReference>
<dbReference type="PANTHER" id="PTHR23389:SF9">
    <property type="entry name" value="DNA LIGASE"/>
    <property type="match status" value="1"/>
</dbReference>
<dbReference type="Pfam" id="PF00533">
    <property type="entry name" value="BRCT"/>
    <property type="match status" value="1"/>
</dbReference>
<dbReference type="Pfam" id="PF01653">
    <property type="entry name" value="DNA_ligase_aden"/>
    <property type="match status" value="1"/>
</dbReference>
<dbReference type="Pfam" id="PF03120">
    <property type="entry name" value="DNA_ligase_OB"/>
    <property type="match status" value="1"/>
</dbReference>
<dbReference type="Pfam" id="PF03119">
    <property type="entry name" value="DNA_ligase_ZBD"/>
    <property type="match status" value="1"/>
</dbReference>
<dbReference type="Pfam" id="PF12826">
    <property type="entry name" value="HHH_2"/>
    <property type="match status" value="1"/>
</dbReference>
<dbReference type="PIRSF" id="PIRSF001604">
    <property type="entry name" value="LigA"/>
    <property type="match status" value="1"/>
</dbReference>
<dbReference type="SMART" id="SM00292">
    <property type="entry name" value="BRCT"/>
    <property type="match status" value="1"/>
</dbReference>
<dbReference type="SMART" id="SM00532">
    <property type="entry name" value="LIGANc"/>
    <property type="match status" value="1"/>
</dbReference>
<dbReference type="SUPFAM" id="SSF52113">
    <property type="entry name" value="BRCT domain"/>
    <property type="match status" value="1"/>
</dbReference>
<dbReference type="SUPFAM" id="SSF56091">
    <property type="entry name" value="DNA ligase/mRNA capping enzyme, catalytic domain"/>
    <property type="match status" value="1"/>
</dbReference>
<dbReference type="SUPFAM" id="SSF50249">
    <property type="entry name" value="Nucleic acid-binding proteins"/>
    <property type="match status" value="1"/>
</dbReference>
<dbReference type="SUPFAM" id="SSF47781">
    <property type="entry name" value="RuvA domain 2-like"/>
    <property type="match status" value="1"/>
</dbReference>
<dbReference type="PROSITE" id="PS50172">
    <property type="entry name" value="BRCT"/>
    <property type="match status" value="1"/>
</dbReference>
<dbReference type="PROSITE" id="PS01055">
    <property type="entry name" value="DNA_LIGASE_N1"/>
    <property type="match status" value="1"/>
</dbReference>
<dbReference type="PROSITE" id="PS01056">
    <property type="entry name" value="DNA_LIGASE_N2"/>
    <property type="match status" value="1"/>
</dbReference>
<gene>
    <name evidence="1" type="primary">ligA2</name>
    <name type="ordered locus">SGR_2021</name>
</gene>
<organism>
    <name type="scientific">Streptomyces griseus subsp. griseus (strain JCM 4626 / CBS 651.72 / NBRC 13350 / KCC S-0626 / ISP 5235)</name>
    <dbReference type="NCBI Taxonomy" id="455632"/>
    <lineage>
        <taxon>Bacteria</taxon>
        <taxon>Bacillati</taxon>
        <taxon>Actinomycetota</taxon>
        <taxon>Actinomycetes</taxon>
        <taxon>Kitasatosporales</taxon>
        <taxon>Streptomycetaceae</taxon>
        <taxon>Streptomyces</taxon>
    </lineage>
</organism>
<name>DNLJ2_STRGG</name>
<protein>
    <recommendedName>
        <fullName evidence="1">DNA ligase 2</fullName>
        <ecNumber evidence="1">6.5.1.2</ecNumber>
    </recommendedName>
    <alternativeName>
        <fullName evidence="1">Polydeoxyribonucleotide synthase [NAD(+)] 2</fullName>
    </alternativeName>
</protein>
<feature type="chain" id="PRO_0000380476" description="DNA ligase 2">
    <location>
        <begin position="1"/>
        <end position="743"/>
    </location>
</feature>
<feature type="domain" description="BRCT" evidence="1">
    <location>
        <begin position="639"/>
        <end position="728"/>
    </location>
</feature>
<feature type="region of interest" description="Disordered" evidence="2">
    <location>
        <begin position="720"/>
        <end position="743"/>
    </location>
</feature>
<feature type="compositionally biased region" description="Low complexity" evidence="2">
    <location>
        <begin position="725"/>
        <end position="743"/>
    </location>
</feature>
<feature type="active site" description="N6-AMP-lysine intermediate" evidence="1">
    <location>
        <position position="127"/>
    </location>
</feature>
<feature type="binding site" evidence="1">
    <location>
        <begin position="45"/>
        <end position="49"/>
    </location>
    <ligand>
        <name>NAD(+)</name>
        <dbReference type="ChEBI" id="CHEBI:57540"/>
    </ligand>
</feature>
<feature type="binding site" evidence="1">
    <location>
        <begin position="94"/>
        <end position="95"/>
    </location>
    <ligand>
        <name>NAD(+)</name>
        <dbReference type="ChEBI" id="CHEBI:57540"/>
    </ligand>
</feature>
<feature type="binding site" evidence="1">
    <location>
        <position position="125"/>
    </location>
    <ligand>
        <name>NAD(+)</name>
        <dbReference type="ChEBI" id="CHEBI:57540"/>
    </ligand>
</feature>
<feature type="binding site" evidence="1">
    <location>
        <position position="148"/>
    </location>
    <ligand>
        <name>NAD(+)</name>
        <dbReference type="ChEBI" id="CHEBI:57540"/>
    </ligand>
</feature>
<feature type="binding site" evidence="1">
    <location>
        <position position="185"/>
    </location>
    <ligand>
        <name>NAD(+)</name>
        <dbReference type="ChEBI" id="CHEBI:57540"/>
    </ligand>
</feature>
<feature type="binding site" evidence="1">
    <location>
        <position position="301"/>
    </location>
    <ligand>
        <name>NAD(+)</name>
        <dbReference type="ChEBI" id="CHEBI:57540"/>
    </ligand>
</feature>
<feature type="binding site" evidence="1">
    <location>
        <position position="325"/>
    </location>
    <ligand>
        <name>NAD(+)</name>
        <dbReference type="ChEBI" id="CHEBI:57540"/>
    </ligand>
</feature>
<feature type="binding site" evidence="1">
    <location>
        <position position="419"/>
    </location>
    <ligand>
        <name>Zn(2+)</name>
        <dbReference type="ChEBI" id="CHEBI:29105"/>
    </ligand>
</feature>
<feature type="binding site" evidence="1">
    <location>
        <position position="422"/>
    </location>
    <ligand>
        <name>Zn(2+)</name>
        <dbReference type="ChEBI" id="CHEBI:29105"/>
    </ligand>
</feature>
<feature type="binding site" evidence="1">
    <location>
        <position position="438"/>
    </location>
    <ligand>
        <name>Zn(2+)</name>
        <dbReference type="ChEBI" id="CHEBI:29105"/>
    </ligand>
</feature>
<feature type="binding site" evidence="1">
    <location>
        <position position="444"/>
    </location>
    <ligand>
        <name>Zn(2+)</name>
        <dbReference type="ChEBI" id="CHEBI:29105"/>
    </ligand>
</feature>
<evidence type="ECO:0000255" key="1">
    <source>
        <dbReference type="HAMAP-Rule" id="MF_01588"/>
    </source>
</evidence>
<evidence type="ECO:0000256" key="2">
    <source>
        <dbReference type="SAM" id="MobiDB-lite"/>
    </source>
</evidence>